<comment type="function">
    <text evidence="1">Is required not only for elongation of protein synthesis but also for the initiation of all mRNA translation through initiator tRNA(fMet) aminoacylation.</text>
</comment>
<comment type="catalytic activity">
    <reaction evidence="1">
        <text>tRNA(Met) + L-methionine + ATP = L-methionyl-tRNA(Met) + AMP + diphosphate</text>
        <dbReference type="Rhea" id="RHEA:13481"/>
        <dbReference type="Rhea" id="RHEA-COMP:9667"/>
        <dbReference type="Rhea" id="RHEA-COMP:9698"/>
        <dbReference type="ChEBI" id="CHEBI:30616"/>
        <dbReference type="ChEBI" id="CHEBI:33019"/>
        <dbReference type="ChEBI" id="CHEBI:57844"/>
        <dbReference type="ChEBI" id="CHEBI:78442"/>
        <dbReference type="ChEBI" id="CHEBI:78530"/>
        <dbReference type="ChEBI" id="CHEBI:456215"/>
        <dbReference type="EC" id="6.1.1.10"/>
    </reaction>
</comment>
<comment type="cofactor">
    <cofactor evidence="1">
        <name>Zn(2+)</name>
        <dbReference type="ChEBI" id="CHEBI:29105"/>
    </cofactor>
    <text evidence="1">Binds 1 zinc ion per subunit.</text>
</comment>
<comment type="subunit">
    <text evidence="1">Homodimer.</text>
</comment>
<comment type="subcellular location">
    <subcellularLocation>
        <location evidence="1">Cytoplasm</location>
    </subcellularLocation>
</comment>
<comment type="similarity">
    <text evidence="1">Belongs to the class-I aminoacyl-tRNA synthetase family. MetG type 1 subfamily.</text>
</comment>
<keyword id="KW-0030">Aminoacyl-tRNA synthetase</keyword>
<keyword id="KW-0067">ATP-binding</keyword>
<keyword id="KW-0963">Cytoplasm</keyword>
<keyword id="KW-0436">Ligase</keyword>
<keyword id="KW-0479">Metal-binding</keyword>
<keyword id="KW-0547">Nucleotide-binding</keyword>
<keyword id="KW-0648">Protein biosynthesis</keyword>
<keyword id="KW-0694">RNA-binding</keyword>
<keyword id="KW-0820">tRNA-binding</keyword>
<keyword id="KW-0862">Zinc</keyword>
<feature type="chain" id="PRO_1000093740" description="Methionine--tRNA ligase">
    <location>
        <begin position="1"/>
        <end position="686"/>
    </location>
</feature>
<feature type="domain" description="tRNA-binding" evidence="1">
    <location>
        <begin position="585"/>
        <end position="686"/>
    </location>
</feature>
<feature type="short sequence motif" description="'HIGH' region">
    <location>
        <begin position="15"/>
        <end position="25"/>
    </location>
</feature>
<feature type="short sequence motif" description="'KMSKS' region">
    <location>
        <begin position="332"/>
        <end position="336"/>
    </location>
</feature>
<feature type="binding site" evidence="1">
    <location>
        <position position="146"/>
    </location>
    <ligand>
        <name>Zn(2+)</name>
        <dbReference type="ChEBI" id="CHEBI:29105"/>
    </ligand>
</feature>
<feature type="binding site" evidence="1">
    <location>
        <position position="149"/>
    </location>
    <ligand>
        <name>Zn(2+)</name>
        <dbReference type="ChEBI" id="CHEBI:29105"/>
    </ligand>
</feature>
<feature type="binding site" evidence="1">
    <location>
        <position position="159"/>
    </location>
    <ligand>
        <name>Zn(2+)</name>
        <dbReference type="ChEBI" id="CHEBI:29105"/>
    </ligand>
</feature>
<feature type="binding site" evidence="1">
    <location>
        <position position="162"/>
    </location>
    <ligand>
        <name>Zn(2+)</name>
        <dbReference type="ChEBI" id="CHEBI:29105"/>
    </ligand>
</feature>
<feature type="binding site" evidence="1">
    <location>
        <position position="335"/>
    </location>
    <ligand>
        <name>ATP</name>
        <dbReference type="ChEBI" id="CHEBI:30616"/>
    </ligand>
</feature>
<accession>B5FG53</accession>
<proteinExistence type="inferred from homology"/>
<protein>
    <recommendedName>
        <fullName evidence="1">Methionine--tRNA ligase</fullName>
        <ecNumber evidence="1">6.1.1.10</ecNumber>
    </recommendedName>
    <alternativeName>
        <fullName evidence="1">Methionyl-tRNA synthetase</fullName>
        <shortName evidence="1">MetRS</shortName>
    </alternativeName>
</protein>
<dbReference type="EC" id="6.1.1.10" evidence="1"/>
<dbReference type="EMBL" id="CP001139">
    <property type="protein sequence ID" value="ACH66959.1"/>
    <property type="molecule type" value="Genomic_DNA"/>
</dbReference>
<dbReference type="RefSeq" id="WP_005420155.1">
    <property type="nucleotide sequence ID" value="NC_011184.1"/>
</dbReference>
<dbReference type="SMR" id="B5FG53"/>
<dbReference type="KEGG" id="vfm:VFMJ11_1881"/>
<dbReference type="HOGENOM" id="CLU_009710_7_0_6"/>
<dbReference type="Proteomes" id="UP000001857">
    <property type="component" value="Chromosome I"/>
</dbReference>
<dbReference type="GO" id="GO:0005829">
    <property type="term" value="C:cytosol"/>
    <property type="evidence" value="ECO:0007669"/>
    <property type="project" value="TreeGrafter"/>
</dbReference>
<dbReference type="GO" id="GO:0005524">
    <property type="term" value="F:ATP binding"/>
    <property type="evidence" value="ECO:0007669"/>
    <property type="project" value="UniProtKB-UniRule"/>
</dbReference>
<dbReference type="GO" id="GO:0046872">
    <property type="term" value="F:metal ion binding"/>
    <property type="evidence" value="ECO:0007669"/>
    <property type="project" value="UniProtKB-KW"/>
</dbReference>
<dbReference type="GO" id="GO:0004825">
    <property type="term" value="F:methionine-tRNA ligase activity"/>
    <property type="evidence" value="ECO:0007669"/>
    <property type="project" value="UniProtKB-UniRule"/>
</dbReference>
<dbReference type="GO" id="GO:0000049">
    <property type="term" value="F:tRNA binding"/>
    <property type="evidence" value="ECO:0007669"/>
    <property type="project" value="UniProtKB-KW"/>
</dbReference>
<dbReference type="GO" id="GO:0006431">
    <property type="term" value="P:methionyl-tRNA aminoacylation"/>
    <property type="evidence" value="ECO:0007669"/>
    <property type="project" value="UniProtKB-UniRule"/>
</dbReference>
<dbReference type="CDD" id="cd07957">
    <property type="entry name" value="Anticodon_Ia_Met"/>
    <property type="match status" value="1"/>
</dbReference>
<dbReference type="CDD" id="cd00814">
    <property type="entry name" value="MetRS_core"/>
    <property type="match status" value="1"/>
</dbReference>
<dbReference type="CDD" id="cd02800">
    <property type="entry name" value="tRNA_bind_EcMetRS_like"/>
    <property type="match status" value="1"/>
</dbReference>
<dbReference type="FunFam" id="1.10.730.10:FF:000005">
    <property type="entry name" value="Methionine--tRNA ligase"/>
    <property type="match status" value="1"/>
</dbReference>
<dbReference type="FunFam" id="2.20.28.20:FF:000001">
    <property type="entry name" value="Methionine--tRNA ligase"/>
    <property type="match status" value="1"/>
</dbReference>
<dbReference type="FunFam" id="2.40.50.140:FF:000042">
    <property type="entry name" value="Methionine--tRNA ligase"/>
    <property type="match status" value="1"/>
</dbReference>
<dbReference type="Gene3D" id="3.40.50.620">
    <property type="entry name" value="HUPs"/>
    <property type="match status" value="1"/>
</dbReference>
<dbReference type="Gene3D" id="1.10.730.10">
    <property type="entry name" value="Isoleucyl-tRNA Synthetase, Domain 1"/>
    <property type="match status" value="1"/>
</dbReference>
<dbReference type="Gene3D" id="2.20.28.20">
    <property type="entry name" value="Methionyl-tRNA synthetase, Zn-domain"/>
    <property type="match status" value="1"/>
</dbReference>
<dbReference type="Gene3D" id="2.40.50.140">
    <property type="entry name" value="Nucleic acid-binding proteins"/>
    <property type="match status" value="1"/>
</dbReference>
<dbReference type="HAMAP" id="MF_00098">
    <property type="entry name" value="Met_tRNA_synth_type1"/>
    <property type="match status" value="1"/>
</dbReference>
<dbReference type="InterPro" id="IPR001412">
    <property type="entry name" value="aa-tRNA-synth_I_CS"/>
</dbReference>
<dbReference type="InterPro" id="IPR041872">
    <property type="entry name" value="Anticodon_Met"/>
</dbReference>
<dbReference type="InterPro" id="IPR004495">
    <property type="entry name" value="Met-tRNA-synth_bsu_C"/>
</dbReference>
<dbReference type="InterPro" id="IPR023458">
    <property type="entry name" value="Met-tRNA_ligase_1"/>
</dbReference>
<dbReference type="InterPro" id="IPR014758">
    <property type="entry name" value="Met-tRNA_synth"/>
</dbReference>
<dbReference type="InterPro" id="IPR015413">
    <property type="entry name" value="Methionyl/Leucyl_tRNA_Synth"/>
</dbReference>
<dbReference type="InterPro" id="IPR033911">
    <property type="entry name" value="MetRS_core"/>
</dbReference>
<dbReference type="InterPro" id="IPR029038">
    <property type="entry name" value="MetRS_Zn"/>
</dbReference>
<dbReference type="InterPro" id="IPR012340">
    <property type="entry name" value="NA-bd_OB-fold"/>
</dbReference>
<dbReference type="InterPro" id="IPR014729">
    <property type="entry name" value="Rossmann-like_a/b/a_fold"/>
</dbReference>
<dbReference type="InterPro" id="IPR002547">
    <property type="entry name" value="tRNA-bd_dom"/>
</dbReference>
<dbReference type="InterPro" id="IPR009080">
    <property type="entry name" value="tRNAsynth_Ia_anticodon-bd"/>
</dbReference>
<dbReference type="NCBIfam" id="TIGR00398">
    <property type="entry name" value="metG"/>
    <property type="match status" value="1"/>
</dbReference>
<dbReference type="NCBIfam" id="TIGR00399">
    <property type="entry name" value="metG_C_term"/>
    <property type="match status" value="1"/>
</dbReference>
<dbReference type="NCBIfam" id="NF001100">
    <property type="entry name" value="PRK00133.1"/>
    <property type="match status" value="1"/>
</dbReference>
<dbReference type="PANTHER" id="PTHR45765">
    <property type="entry name" value="METHIONINE--TRNA LIGASE"/>
    <property type="match status" value="1"/>
</dbReference>
<dbReference type="PANTHER" id="PTHR45765:SF1">
    <property type="entry name" value="METHIONINE--TRNA LIGASE, CYTOPLASMIC"/>
    <property type="match status" value="1"/>
</dbReference>
<dbReference type="Pfam" id="PF19303">
    <property type="entry name" value="Anticodon_3"/>
    <property type="match status" value="1"/>
</dbReference>
<dbReference type="Pfam" id="PF09334">
    <property type="entry name" value="tRNA-synt_1g"/>
    <property type="match status" value="1"/>
</dbReference>
<dbReference type="Pfam" id="PF01588">
    <property type="entry name" value="tRNA_bind"/>
    <property type="match status" value="1"/>
</dbReference>
<dbReference type="PRINTS" id="PR01041">
    <property type="entry name" value="TRNASYNTHMET"/>
</dbReference>
<dbReference type="SUPFAM" id="SSF47323">
    <property type="entry name" value="Anticodon-binding domain of a subclass of class I aminoacyl-tRNA synthetases"/>
    <property type="match status" value="1"/>
</dbReference>
<dbReference type="SUPFAM" id="SSF57770">
    <property type="entry name" value="Methionyl-tRNA synthetase (MetRS), Zn-domain"/>
    <property type="match status" value="1"/>
</dbReference>
<dbReference type="SUPFAM" id="SSF50249">
    <property type="entry name" value="Nucleic acid-binding proteins"/>
    <property type="match status" value="1"/>
</dbReference>
<dbReference type="SUPFAM" id="SSF52374">
    <property type="entry name" value="Nucleotidylyl transferase"/>
    <property type="match status" value="1"/>
</dbReference>
<dbReference type="PROSITE" id="PS00178">
    <property type="entry name" value="AA_TRNA_LIGASE_I"/>
    <property type="match status" value="1"/>
</dbReference>
<dbReference type="PROSITE" id="PS50886">
    <property type="entry name" value="TRBD"/>
    <property type="match status" value="1"/>
</dbReference>
<evidence type="ECO:0000255" key="1">
    <source>
        <dbReference type="HAMAP-Rule" id="MF_00098"/>
    </source>
</evidence>
<reference key="1">
    <citation type="submission" date="2008-08" db="EMBL/GenBank/DDBJ databases">
        <title>Complete sequence of Vibrio fischeri strain MJ11.</title>
        <authorList>
            <person name="Mandel M.J."/>
            <person name="Stabb E.V."/>
            <person name="Ruby E.G."/>
            <person name="Ferriera S."/>
            <person name="Johnson J."/>
            <person name="Kravitz S."/>
            <person name="Beeson K."/>
            <person name="Sutton G."/>
            <person name="Rogers Y.-H."/>
            <person name="Friedman R."/>
            <person name="Frazier M."/>
            <person name="Venter J.C."/>
        </authorList>
    </citation>
    <scope>NUCLEOTIDE SEQUENCE [LARGE SCALE GENOMIC DNA]</scope>
    <source>
        <strain>MJ11</strain>
    </source>
</reference>
<gene>
    <name evidence="1" type="primary">metG</name>
    <name type="ordered locus">VFMJ11_1881</name>
</gene>
<organism>
    <name type="scientific">Aliivibrio fischeri (strain MJ11)</name>
    <name type="common">Vibrio fischeri</name>
    <dbReference type="NCBI Taxonomy" id="388396"/>
    <lineage>
        <taxon>Bacteria</taxon>
        <taxon>Pseudomonadati</taxon>
        <taxon>Pseudomonadota</taxon>
        <taxon>Gammaproteobacteria</taxon>
        <taxon>Vibrionales</taxon>
        <taxon>Vibrionaceae</taxon>
        <taxon>Aliivibrio</taxon>
    </lineage>
</organism>
<name>SYM_ALIFM</name>
<sequence length="686" mass="77873">MATDPRKILVTCALPYANGSIHLGHMLEHIQADIWVRYQRLRGNDVNFICADDAHGTPIMLKAQQMGISPEEMIAAVSEEHQKDFAGFDISFDNYHSTHSDENRELASHIYLELKKNGFITSRTISQLFDPEKEMFLPDRFVKGTCPKCKAEEQYGDNCDNCGETYSPTDLINPKSAVSGATPVMKDSEHFFFDLPQFESMLKEWTRSGSLQTETANKMQEWFESGLQQWDISRDAPYFGFEIPGETNKFFYVWLDAPIGYMGSFKNLCNKRDDLNFDEYWKKDSTTELYHFIGKDIVYFHSLFWPAMLDGAGFRKPNNVFVHGYVTVNGAKMSKSKGTFIKAGTYLNHLDPECLRYYYAAKLNSRIDDLDLNLEDFTQRVNSDVVNKIVNLASRNAGFITKRFDGKLADNFAEPELYNEFIAAADRIAELYETREFGRAIREITALADKANQYIDEKAPWVLAKEEGKEQELQEVSSVGINLFRVLMAYLKPVMPELAARTEAFLNETLTWEGVAQPLVAHEITKFKALFARIDPKKVEAMIEESKEDAAIEMAAKEKAEAEKEKASQTELDKDPIADEIEFDAFEAVDMRIARIISCEEVPKANKLLKFQLDIGGETRQVFSGIKSAYKPEELEGKLTVMVANLKPRKMKFGMSEGMILAAGPGGKDLWILEPHEGAQPGMRVM</sequence>